<sequence length="954" mass="103117">MGFSLTDYAPYDFANRRHIGPSPKEMGQMLATLGVPSLEALINEALPEGIRRRDPLAFGPALSERDTLHRMRELADKNTVLTSLIGQGYHGTHTPPVILRNILENPAWYTAYTPYQPEISQGRLEALLNFQTMMADLTGLPIANASLLDEGTAAAEAMAMAQRASKSKARGFFVAEDCHPQTIDVIRTRAEPLGIEVIVGAVDALDPEAVFAALFQYPGSYGHVRDYSDVIEALHGARALAVVAADPLALTLLKSPGEMGADIAIGSTQRFGVPMGYGGPHAAYMTCTDALKRSMPGRIIGVSVDARGNKAYRLSLQTREQHIRREKANSNVCTAQALLAVMASMYGVFHGPDGLKAIAQTVHRKTARMADGLTELGFKVDPQDYFDTITVKVGSMQGVILAAALREGVNLRKVGTDRIGITLDELTLGRTIEAVWRAFGAEGMVYDKTRMVYHLPQEMLRESSYMTHPIFHMNRAEAEMTRYMRRLADRDLALDRAMIPLGSCTMKLNATVEMLPLTWPEFANLHPFAPADQAAGYHEMIAELSQMLCDVTGYDAMSMQPNSGAQGEYAGLLAIRGYHRARGEGHRNICLIPTSAHGTNPASAQMVGWKVVVVKSAENGDIDLEDFRAKAEQHSENLAGCMITYPSTHGVFEEIVREVCDITHAHGGQVYIDGANMNAMVGLSAPGDLGGDVSHLNLHKTFCIPHGGGGPGMGPIGVKAHLAPHLPSHATATGAGFGDAGAVASAAYGSPSILTISYAYCLLMGGAGLTQATKVAILNANYMAKRLSAGFPILYANDKGRVAHECILDTRVLDKIAGVTVEDVAKRLMDCGFHAPTMSWPVAGTLMVEPTESEPKAELDRFCDAMLAIREEADAIAAGSLDAENNPLKRAPHTVEDLVGDWDRPYSREQACYPPGAFRVDKYWPPVNRVDNAYGDRNLVCTCPPVEDYAEPAE</sequence>
<organism>
    <name type="scientific">Dinoroseobacter shibae (strain DSM 16493 / NCIMB 14021 / DFL 12)</name>
    <dbReference type="NCBI Taxonomy" id="398580"/>
    <lineage>
        <taxon>Bacteria</taxon>
        <taxon>Pseudomonadati</taxon>
        <taxon>Pseudomonadota</taxon>
        <taxon>Alphaproteobacteria</taxon>
        <taxon>Rhodobacterales</taxon>
        <taxon>Roseobacteraceae</taxon>
        <taxon>Dinoroseobacter</taxon>
    </lineage>
</organism>
<reference key="1">
    <citation type="journal article" date="2010" name="ISME J.">
        <title>The complete genome sequence of the algal symbiont Dinoroseobacter shibae: a hitchhiker's guide to life in the sea.</title>
        <authorList>
            <person name="Wagner-Dobler I."/>
            <person name="Ballhausen B."/>
            <person name="Berger M."/>
            <person name="Brinkhoff T."/>
            <person name="Buchholz I."/>
            <person name="Bunk B."/>
            <person name="Cypionka H."/>
            <person name="Daniel R."/>
            <person name="Drepper T."/>
            <person name="Gerdts G."/>
            <person name="Hahnke S."/>
            <person name="Han C."/>
            <person name="Jahn D."/>
            <person name="Kalhoefer D."/>
            <person name="Kiss H."/>
            <person name="Klenk H.P."/>
            <person name="Kyrpides N."/>
            <person name="Liebl W."/>
            <person name="Liesegang H."/>
            <person name="Meincke L."/>
            <person name="Pati A."/>
            <person name="Petersen J."/>
            <person name="Piekarski T."/>
            <person name="Pommerenke C."/>
            <person name="Pradella S."/>
            <person name="Pukall R."/>
            <person name="Rabus R."/>
            <person name="Stackebrandt E."/>
            <person name="Thole S."/>
            <person name="Thompson L."/>
            <person name="Tielen P."/>
            <person name="Tomasch J."/>
            <person name="von Jan M."/>
            <person name="Wanphrut N."/>
            <person name="Wichels A."/>
            <person name="Zech H."/>
            <person name="Simon M."/>
        </authorList>
    </citation>
    <scope>NUCLEOTIDE SEQUENCE [LARGE SCALE GENOMIC DNA]</scope>
    <source>
        <strain>DSM 16493 / NCIMB 14021 / DFL 12</strain>
    </source>
</reference>
<dbReference type="EC" id="1.4.4.2" evidence="1"/>
<dbReference type="EMBL" id="CP000830">
    <property type="protein sequence ID" value="ABV94413.1"/>
    <property type="molecule type" value="Genomic_DNA"/>
</dbReference>
<dbReference type="RefSeq" id="WP_012179341.1">
    <property type="nucleotide sequence ID" value="NC_009952.1"/>
</dbReference>
<dbReference type="SMR" id="A8LIH2"/>
<dbReference type="STRING" id="398580.Dshi_2680"/>
<dbReference type="KEGG" id="dsh:Dshi_2680"/>
<dbReference type="eggNOG" id="COG0403">
    <property type="taxonomic scope" value="Bacteria"/>
</dbReference>
<dbReference type="eggNOG" id="COG1003">
    <property type="taxonomic scope" value="Bacteria"/>
</dbReference>
<dbReference type="HOGENOM" id="CLU_004620_3_2_5"/>
<dbReference type="OrthoDB" id="9801272at2"/>
<dbReference type="Proteomes" id="UP000006833">
    <property type="component" value="Chromosome"/>
</dbReference>
<dbReference type="GO" id="GO:0005829">
    <property type="term" value="C:cytosol"/>
    <property type="evidence" value="ECO:0007669"/>
    <property type="project" value="TreeGrafter"/>
</dbReference>
<dbReference type="GO" id="GO:0005960">
    <property type="term" value="C:glycine cleavage complex"/>
    <property type="evidence" value="ECO:0007669"/>
    <property type="project" value="TreeGrafter"/>
</dbReference>
<dbReference type="GO" id="GO:0016594">
    <property type="term" value="F:glycine binding"/>
    <property type="evidence" value="ECO:0007669"/>
    <property type="project" value="TreeGrafter"/>
</dbReference>
<dbReference type="GO" id="GO:0004375">
    <property type="term" value="F:glycine dehydrogenase (decarboxylating) activity"/>
    <property type="evidence" value="ECO:0007669"/>
    <property type="project" value="UniProtKB-EC"/>
</dbReference>
<dbReference type="GO" id="GO:0030170">
    <property type="term" value="F:pyridoxal phosphate binding"/>
    <property type="evidence" value="ECO:0007669"/>
    <property type="project" value="TreeGrafter"/>
</dbReference>
<dbReference type="GO" id="GO:0019464">
    <property type="term" value="P:glycine decarboxylation via glycine cleavage system"/>
    <property type="evidence" value="ECO:0007669"/>
    <property type="project" value="UniProtKB-UniRule"/>
</dbReference>
<dbReference type="CDD" id="cd00613">
    <property type="entry name" value="GDC-P"/>
    <property type="match status" value="2"/>
</dbReference>
<dbReference type="FunFam" id="3.40.640.10:FF:000005">
    <property type="entry name" value="Glycine dehydrogenase (decarboxylating), mitochondrial"/>
    <property type="match status" value="1"/>
</dbReference>
<dbReference type="FunFam" id="3.90.1150.10:FF:000007">
    <property type="entry name" value="Glycine dehydrogenase (decarboxylating), mitochondrial"/>
    <property type="match status" value="1"/>
</dbReference>
<dbReference type="FunFam" id="3.40.640.10:FF:000007">
    <property type="entry name" value="glycine dehydrogenase (Decarboxylating), mitochondrial"/>
    <property type="match status" value="1"/>
</dbReference>
<dbReference type="Gene3D" id="3.90.1150.10">
    <property type="entry name" value="Aspartate Aminotransferase, domain 1"/>
    <property type="match status" value="2"/>
</dbReference>
<dbReference type="Gene3D" id="3.40.640.10">
    <property type="entry name" value="Type I PLP-dependent aspartate aminotransferase-like (Major domain)"/>
    <property type="match status" value="2"/>
</dbReference>
<dbReference type="HAMAP" id="MF_00711">
    <property type="entry name" value="GcvP"/>
    <property type="match status" value="1"/>
</dbReference>
<dbReference type="InterPro" id="IPR003437">
    <property type="entry name" value="GcvP"/>
</dbReference>
<dbReference type="InterPro" id="IPR049316">
    <property type="entry name" value="GDC-P_C"/>
</dbReference>
<dbReference type="InterPro" id="IPR049315">
    <property type="entry name" value="GDC-P_N"/>
</dbReference>
<dbReference type="InterPro" id="IPR020581">
    <property type="entry name" value="GDC_P"/>
</dbReference>
<dbReference type="InterPro" id="IPR015424">
    <property type="entry name" value="PyrdxlP-dep_Trfase"/>
</dbReference>
<dbReference type="InterPro" id="IPR015421">
    <property type="entry name" value="PyrdxlP-dep_Trfase_major"/>
</dbReference>
<dbReference type="InterPro" id="IPR015422">
    <property type="entry name" value="PyrdxlP-dep_Trfase_small"/>
</dbReference>
<dbReference type="NCBIfam" id="TIGR00461">
    <property type="entry name" value="gcvP"/>
    <property type="match status" value="1"/>
</dbReference>
<dbReference type="NCBIfam" id="NF003346">
    <property type="entry name" value="PRK04366.1"/>
    <property type="match status" value="1"/>
</dbReference>
<dbReference type="PANTHER" id="PTHR11773:SF1">
    <property type="entry name" value="GLYCINE DEHYDROGENASE (DECARBOXYLATING), MITOCHONDRIAL"/>
    <property type="match status" value="1"/>
</dbReference>
<dbReference type="PANTHER" id="PTHR11773">
    <property type="entry name" value="GLYCINE DEHYDROGENASE, DECARBOXYLATING"/>
    <property type="match status" value="1"/>
</dbReference>
<dbReference type="Pfam" id="PF21478">
    <property type="entry name" value="GcvP2_C"/>
    <property type="match status" value="1"/>
</dbReference>
<dbReference type="Pfam" id="PF02347">
    <property type="entry name" value="GDC-P"/>
    <property type="match status" value="2"/>
</dbReference>
<dbReference type="SUPFAM" id="SSF53383">
    <property type="entry name" value="PLP-dependent transferases"/>
    <property type="match status" value="2"/>
</dbReference>
<keyword id="KW-0560">Oxidoreductase</keyword>
<keyword id="KW-0663">Pyridoxal phosphate</keyword>
<keyword id="KW-1185">Reference proteome</keyword>
<gene>
    <name evidence="1" type="primary">gcvP</name>
    <name type="ordered locus">Dshi_2680</name>
</gene>
<comment type="function">
    <text evidence="1">The glycine cleavage system catalyzes the degradation of glycine. The P protein binds the alpha-amino group of glycine through its pyridoxal phosphate cofactor; CO(2) is released and the remaining methylamine moiety is then transferred to the lipoamide cofactor of the H protein.</text>
</comment>
<comment type="catalytic activity">
    <reaction evidence="1">
        <text>N(6)-[(R)-lipoyl]-L-lysyl-[glycine-cleavage complex H protein] + glycine + H(+) = N(6)-[(R)-S(8)-aminomethyldihydrolipoyl]-L-lysyl-[glycine-cleavage complex H protein] + CO2</text>
        <dbReference type="Rhea" id="RHEA:24304"/>
        <dbReference type="Rhea" id="RHEA-COMP:10494"/>
        <dbReference type="Rhea" id="RHEA-COMP:10495"/>
        <dbReference type="ChEBI" id="CHEBI:15378"/>
        <dbReference type="ChEBI" id="CHEBI:16526"/>
        <dbReference type="ChEBI" id="CHEBI:57305"/>
        <dbReference type="ChEBI" id="CHEBI:83099"/>
        <dbReference type="ChEBI" id="CHEBI:83143"/>
        <dbReference type="EC" id="1.4.4.2"/>
    </reaction>
</comment>
<comment type="cofactor">
    <cofactor evidence="1">
        <name>pyridoxal 5'-phosphate</name>
        <dbReference type="ChEBI" id="CHEBI:597326"/>
    </cofactor>
</comment>
<comment type="subunit">
    <text evidence="1">The glycine cleavage system is composed of four proteins: P, T, L and H.</text>
</comment>
<comment type="similarity">
    <text evidence="1">Belongs to the GcvP family.</text>
</comment>
<evidence type="ECO:0000255" key="1">
    <source>
        <dbReference type="HAMAP-Rule" id="MF_00711"/>
    </source>
</evidence>
<proteinExistence type="inferred from homology"/>
<protein>
    <recommendedName>
        <fullName evidence="1">Glycine dehydrogenase (decarboxylating)</fullName>
        <ecNumber evidence="1">1.4.4.2</ecNumber>
    </recommendedName>
    <alternativeName>
        <fullName evidence="1">Glycine cleavage system P-protein</fullName>
    </alternativeName>
    <alternativeName>
        <fullName evidence="1">Glycine decarboxylase</fullName>
    </alternativeName>
    <alternativeName>
        <fullName evidence="1">Glycine dehydrogenase (aminomethyl-transferring)</fullName>
    </alternativeName>
</protein>
<feature type="chain" id="PRO_1000083205" description="Glycine dehydrogenase (decarboxylating)">
    <location>
        <begin position="1"/>
        <end position="954"/>
    </location>
</feature>
<feature type="modified residue" description="N6-(pyridoxal phosphate)lysine" evidence="1">
    <location>
        <position position="700"/>
    </location>
</feature>
<name>GCSP_DINSH</name>
<accession>A8LIH2</accession>